<evidence type="ECO:0000250" key="1"/>
<evidence type="ECO:0000305" key="2"/>
<name>RL3_EREGS</name>
<sequence>MSHRKYEAPRHGHLGFLPRKRAASIRGRVKAFPKDDKSKPVALTSFLGYKAGMTTIVRDLDRPGSKFHKREIVEAVSVVDTPPMVVVGVVGYIETPRGLRSLTTVWAEHLSDEIKRRFYKNWYKSKKKAFTKYSAKYAQDGAAIERELARIKKYASVVRVLAHTQVRKTPLVQKKAHLAEIQLNGGSVSEKVDWAREHFEKTVSVDSVFEQNEMIDVIAVTKGHGFEGVTHRWGTKKLPRKTHRGLRKVACIGAWHPAHVMWTVARAGQNGYHHRTSINHKVYRIGKGGDEGNAATEFDRTKKTITPMGGFVHYGAVNNDFVMVKGSIPGTRKRVVTLRKSLYTSTSRRALEEVNLKWIDTASKFGKGRFQTPAEKHAFMGTLKKDL</sequence>
<protein>
    <recommendedName>
        <fullName evidence="2">Large ribosomal subunit protein uL3</fullName>
    </recommendedName>
    <alternativeName>
        <fullName>60S ribosomal protein L3</fullName>
    </alternativeName>
</protein>
<accession>Q759R7</accession>
<reference key="1">
    <citation type="journal article" date="2004" name="Science">
        <title>The Ashbya gossypii genome as a tool for mapping the ancient Saccharomyces cerevisiae genome.</title>
        <authorList>
            <person name="Dietrich F.S."/>
            <person name="Voegeli S."/>
            <person name="Brachat S."/>
            <person name="Lerch A."/>
            <person name="Gates K."/>
            <person name="Steiner S."/>
            <person name="Mohr C."/>
            <person name="Poehlmann R."/>
            <person name="Luedi P."/>
            <person name="Choi S."/>
            <person name="Wing R.A."/>
            <person name="Flavier A."/>
            <person name="Gaffney T.D."/>
            <person name="Philippsen P."/>
        </authorList>
    </citation>
    <scope>NUCLEOTIDE SEQUENCE [LARGE SCALE GENOMIC DNA]</scope>
    <source>
        <strain>ATCC 10895 / CBS 109.51 / FGSC 9923 / NRRL Y-1056</strain>
    </source>
</reference>
<reference key="2">
    <citation type="journal article" date="2013" name="G3 (Bethesda)">
        <title>Genomes of Ashbya fungi isolated from insects reveal four mating-type loci, numerous translocations, lack of transposons, and distinct gene duplications.</title>
        <authorList>
            <person name="Dietrich F.S."/>
            <person name="Voegeli S."/>
            <person name="Kuo S."/>
            <person name="Philippsen P."/>
        </authorList>
    </citation>
    <scope>GENOME REANNOTATION</scope>
    <scope>SEQUENCE REVISION TO 132-137</scope>
    <source>
        <strain>ATCC 10895 / CBS 109.51 / FGSC 9923 / NRRL Y-1056</strain>
    </source>
</reference>
<gene>
    <name type="primary">RPL3</name>
    <name type="ordered locus">ADR206W</name>
</gene>
<dbReference type="EMBL" id="AE016817">
    <property type="protein sequence ID" value="AAS52126.2"/>
    <property type="molecule type" value="Genomic_DNA"/>
</dbReference>
<dbReference type="RefSeq" id="NP_984302.2">
    <property type="nucleotide sequence ID" value="NM_209655.2"/>
</dbReference>
<dbReference type="SMR" id="Q759R7"/>
<dbReference type="FunCoup" id="Q759R7">
    <property type="interactions" value="895"/>
</dbReference>
<dbReference type="STRING" id="284811.Q759R7"/>
<dbReference type="EnsemblFungi" id="AAS52126">
    <property type="protein sequence ID" value="AAS52126"/>
    <property type="gene ID" value="AGOS_ADR206W"/>
</dbReference>
<dbReference type="GeneID" id="4620464"/>
<dbReference type="KEGG" id="ago:AGOS_ADR206W"/>
<dbReference type="eggNOG" id="KOG0746">
    <property type="taxonomic scope" value="Eukaryota"/>
</dbReference>
<dbReference type="HOGENOM" id="CLU_033361_2_1_1"/>
<dbReference type="InParanoid" id="Q759R7"/>
<dbReference type="OMA" id="QRTEYNK"/>
<dbReference type="OrthoDB" id="1611972at2759"/>
<dbReference type="Proteomes" id="UP000000591">
    <property type="component" value="Chromosome IV"/>
</dbReference>
<dbReference type="GO" id="GO:0022625">
    <property type="term" value="C:cytosolic large ribosomal subunit"/>
    <property type="evidence" value="ECO:0000318"/>
    <property type="project" value="GO_Central"/>
</dbReference>
<dbReference type="GO" id="GO:0003723">
    <property type="term" value="F:RNA binding"/>
    <property type="evidence" value="ECO:0000318"/>
    <property type="project" value="GO_Central"/>
</dbReference>
<dbReference type="GO" id="GO:0003735">
    <property type="term" value="F:structural constituent of ribosome"/>
    <property type="evidence" value="ECO:0000318"/>
    <property type="project" value="GO_Central"/>
</dbReference>
<dbReference type="GO" id="GO:1990145">
    <property type="term" value="P:maintenance of translational fidelity"/>
    <property type="evidence" value="ECO:0007669"/>
    <property type="project" value="EnsemblFungi"/>
</dbReference>
<dbReference type="GO" id="GO:0000027">
    <property type="term" value="P:ribosomal large subunit assembly"/>
    <property type="evidence" value="ECO:0007669"/>
    <property type="project" value="EnsemblFungi"/>
</dbReference>
<dbReference type="GO" id="GO:0006364">
    <property type="term" value="P:rRNA processing"/>
    <property type="evidence" value="ECO:0007669"/>
    <property type="project" value="EnsemblFungi"/>
</dbReference>
<dbReference type="GO" id="GO:0006412">
    <property type="term" value="P:translation"/>
    <property type="evidence" value="ECO:0000318"/>
    <property type="project" value="GO_Central"/>
</dbReference>
<dbReference type="GO" id="GO:0006414">
    <property type="term" value="P:translational elongation"/>
    <property type="evidence" value="ECO:0007669"/>
    <property type="project" value="EnsemblFungi"/>
</dbReference>
<dbReference type="FunFam" id="2.40.30.10:FF:000079">
    <property type="entry name" value="60S ribosomal protein L3"/>
    <property type="match status" value="1"/>
</dbReference>
<dbReference type="FunFam" id="3.30.1430.10:FF:000001">
    <property type="entry name" value="60S ribosomal protein L3"/>
    <property type="match status" value="1"/>
</dbReference>
<dbReference type="FunFam" id="4.10.960.10:FF:000002">
    <property type="entry name" value="60S ribosomal protein L3"/>
    <property type="match status" value="1"/>
</dbReference>
<dbReference type="FunFam" id="2.40.30.10:FF:000351">
    <property type="entry name" value="Ribosomal protein L3"/>
    <property type="match status" value="1"/>
</dbReference>
<dbReference type="Gene3D" id="3.30.1430.10">
    <property type="match status" value="1"/>
</dbReference>
<dbReference type="Gene3D" id="4.10.960.10">
    <property type="entry name" value="Ribosomal protein L3, domain 3"/>
    <property type="match status" value="1"/>
</dbReference>
<dbReference type="Gene3D" id="2.40.30.10">
    <property type="entry name" value="Translation factors"/>
    <property type="match status" value="1"/>
</dbReference>
<dbReference type="InterPro" id="IPR045077">
    <property type="entry name" value="L3_arc_euk"/>
</dbReference>
<dbReference type="InterPro" id="IPR044892">
    <property type="entry name" value="Ribosomal_L3_dom_3_arc_sf"/>
</dbReference>
<dbReference type="InterPro" id="IPR000597">
    <property type="entry name" value="Ribosomal_uL3"/>
</dbReference>
<dbReference type="InterPro" id="IPR019926">
    <property type="entry name" value="Ribosomal_uL3_CS"/>
</dbReference>
<dbReference type="InterPro" id="IPR009000">
    <property type="entry name" value="Transl_B-barrel_sf"/>
</dbReference>
<dbReference type="PANTHER" id="PTHR11363">
    <property type="entry name" value="60S RIBOSOMAL PROTEIN L3-RELATED"/>
    <property type="match status" value="1"/>
</dbReference>
<dbReference type="PANTHER" id="PTHR11363:SF5">
    <property type="entry name" value="LARGE RIBOSOMAL SUBUNIT PROTEIN UL3"/>
    <property type="match status" value="1"/>
</dbReference>
<dbReference type="Pfam" id="PF00297">
    <property type="entry name" value="Ribosomal_L3"/>
    <property type="match status" value="1"/>
</dbReference>
<dbReference type="SUPFAM" id="SSF50447">
    <property type="entry name" value="Translation proteins"/>
    <property type="match status" value="1"/>
</dbReference>
<dbReference type="PROSITE" id="PS00474">
    <property type="entry name" value="RIBOSOMAL_L3"/>
    <property type="match status" value="1"/>
</dbReference>
<comment type="subcellular location">
    <subcellularLocation>
        <location evidence="1">Cytoplasm</location>
    </subcellularLocation>
</comment>
<comment type="similarity">
    <text evidence="2">Belongs to the universal ribosomal protein uL3 family.</text>
</comment>
<proteinExistence type="inferred from homology"/>
<feature type="chain" id="PRO_0000077243" description="Large ribosomal subunit protein uL3">
    <location>
        <begin position="1"/>
        <end position="387"/>
    </location>
</feature>
<keyword id="KW-0963">Cytoplasm</keyword>
<keyword id="KW-1185">Reference proteome</keyword>
<keyword id="KW-0687">Ribonucleoprotein</keyword>
<keyword id="KW-0689">Ribosomal protein</keyword>
<organism>
    <name type="scientific">Eremothecium gossypii (strain ATCC 10895 / CBS 109.51 / FGSC 9923 / NRRL Y-1056)</name>
    <name type="common">Yeast</name>
    <name type="synonym">Ashbya gossypii</name>
    <dbReference type="NCBI Taxonomy" id="284811"/>
    <lineage>
        <taxon>Eukaryota</taxon>
        <taxon>Fungi</taxon>
        <taxon>Dikarya</taxon>
        <taxon>Ascomycota</taxon>
        <taxon>Saccharomycotina</taxon>
        <taxon>Saccharomycetes</taxon>
        <taxon>Saccharomycetales</taxon>
        <taxon>Saccharomycetaceae</taxon>
        <taxon>Eremothecium</taxon>
    </lineage>
</organism>